<sequence length="307" mass="33641">MEDEEGIGLILARATELRLKISDCIDNSSTTVSDNGDGNEDLSPGEGRKSEIIGNQDKDFDSISSEDVDEAEAERLLRIRDALEALESQLASLQNLRQRQQYEKQLALSEIDYSRKMLLEKLKEYKGKDFEVLRETTTFAGERVDYENDLLLPPYPVHPPLSLGLDNNNGYLSHLPSKKKSDANGFGSGHVRNEAEAKSPNGGSGGSSHGVIRFLGSVAKIVLPIIGVISLLSASGYGPEMRKRGASLNLFGLLPHRATRGKRTPNQCPPGKVLVIEDGEARCLVKERVEIPFDSVVAKRDVTYGYG</sequence>
<comment type="function">
    <text evidence="3 4 7 8 9 10">Component of the plastid division machinery consisting in a binary fission accomplished by the simultaneous constriction of the FtsZ ring on the stromal side of the inner envelope membrane, and the ARC5/DRP5B ring on the cytosolic side of the outer envelope membrane (PubMed:28248291). Positive factor of chloroplast division required, with a dosage effect, to mediate the recruitment and dimerization of ARC5/DRP5B at the midplastid constriction site in the cytoplasm at plastid outer envelope membranes (OEMs) (PubMed:27988788, PubMed:28248291, PubMed:32005784). Prevents ARC5/DRP5B GTPase acrivity (PubMed:27988788). Relays plastid division site position between stroma and outer surface via interactions with the cytoplasmic ARC5/DRP5B and the inner membrane ARC6 that recruits stromal FtsZ ring (PubMed:28248291). Binding to phosphatidylinositol 4-phosphate (PI4P) modulates negatively chloroplast division (PubMed:25736058).</text>
</comment>
<comment type="subunit">
    <text evidence="4 9 10">Interacts (via C-terminus) with ARC6 (via C-terminus) in the chloroplast intermembrane space; this interaction induces ARC6 homodimerization and leads to the formation of a heterotetramer containing two ARC6 and two PDV2 subunits (PubMed:18812496, PubMed:28248291). Interacts with ARC5/DRP5B (PubMed:32005784).</text>
</comment>
<comment type="interaction">
    <interactant intactId="EBI-2000823">
        <id>Q9XII1</id>
    </interactant>
    <interactant intactId="EBI-2000800">
        <id>Q9FIG9</id>
        <label>ARC6</label>
    </interactant>
    <organismsDiffer>false</organismsDiffer>
    <experiments>3</experiments>
</comment>
<comment type="subcellular location">
    <subcellularLocation>
        <location evidence="4 5 10">Plastid</location>
        <location evidence="4 5 10">Chloroplast outer membrane</location>
        <topology evidence="4 5">Single-pass membrane protein</topology>
    </subcellularLocation>
    <text evidence="4 10">Plastid equatorial positioning in a discontinuous ring mediated by ARC6 (PubMed:18812496). Colocalizes with ARC5/DRP5B at the chloroplast division site (PubMed:32005784).</text>
</comment>
<comment type="alternative products">
    <event type="alternative splicing"/>
    <isoform>
        <id>Q9XII1-1</id>
        <name>1</name>
        <sequence type="displayed"/>
    </isoform>
    <isoform>
        <id>Q9XII1-2</id>
        <name>2</name>
        <sequence type="described" ref="VSP_040897"/>
    </isoform>
</comment>
<comment type="tissue specificity">
    <text evidence="8">Mostly expressed in young leaves.</text>
</comment>
<comment type="developmental stage">
    <text evidence="8">Highest levels in young developing leaves with a sharp expression decrease in fast-growing and mature leaves (at protein level).</text>
</comment>
<comment type="induction">
    <text evidence="6">Slightly induced by gibberellic acid (GA).</text>
</comment>
<comment type="disruption phenotype">
    <text evidence="3 4 8 9 10">Reduced number of constricted and large chloroplasts (PubMed:16998069, PubMed:18812496). Attenuated PDV2-induced ARC6 dimerization in the chloroplast intermembrane space leading to an abnormal morphology of ARC6 rings thus compromizing plastidial division (PubMed:28248291). Altered localization of ARC5/DRP5B in cytosol only rather than at the constriction sites of enlarged chloroplasts (PubMed:32005784). In pd116, reduced number of dumbbell-shaped and large chloroplasts in mesophyll cells, with sometimes unique giant chloroplasts (PubMed:27988788).</text>
</comment>
<name>PDV2_ARATH</name>
<proteinExistence type="evidence at protein level"/>
<protein>
    <recommendedName>
        <fullName evidence="12">Plastid division protein PDV2</fullName>
    </recommendedName>
    <alternativeName>
        <fullName evidence="12">Protein PLASTID DIVISION2</fullName>
    </alternativeName>
</protein>
<accession>Q9XII1</accession>
<accession>Q93ZL0</accession>
<gene>
    <name evidence="12" type="primary">PDV2</name>
    <name evidence="13" type="synonym">PD116</name>
    <name evidence="14" type="ordered locus">At2g16070</name>
    <name evidence="15" type="ORF">F7H1.9</name>
</gene>
<keyword id="KW-0002">3D-structure</keyword>
<keyword id="KW-0007">Acetylation</keyword>
<keyword id="KW-0025">Alternative splicing</keyword>
<keyword id="KW-0150">Chloroplast</keyword>
<keyword id="KW-0175">Coiled coil</keyword>
<keyword id="KW-0472">Membrane</keyword>
<keyword id="KW-0597">Phosphoprotein</keyword>
<keyword id="KW-0934">Plastid</keyword>
<keyword id="KW-1002">Plastid outer membrane</keyword>
<keyword id="KW-1185">Reference proteome</keyword>
<keyword id="KW-0812">Transmembrane</keyword>
<keyword id="KW-1133">Transmembrane helix</keyword>
<evidence type="ECO:0000255" key="1"/>
<evidence type="ECO:0000256" key="2">
    <source>
        <dbReference type="SAM" id="MobiDB-lite"/>
    </source>
</evidence>
<evidence type="ECO:0000269" key="3">
    <source>
    </source>
</evidence>
<evidence type="ECO:0000269" key="4">
    <source>
    </source>
</evidence>
<evidence type="ECO:0000269" key="5">
    <source>
    </source>
</evidence>
<evidence type="ECO:0000269" key="6">
    <source>
    </source>
</evidence>
<evidence type="ECO:0000269" key="7">
    <source>
    </source>
</evidence>
<evidence type="ECO:0000269" key="8">
    <source>
    </source>
</evidence>
<evidence type="ECO:0000269" key="9">
    <source>
    </source>
</evidence>
<evidence type="ECO:0000269" key="10">
    <source>
    </source>
</evidence>
<evidence type="ECO:0000303" key="11">
    <source>
    </source>
</evidence>
<evidence type="ECO:0000303" key="12">
    <source>
    </source>
</evidence>
<evidence type="ECO:0000303" key="13">
    <source>
    </source>
</evidence>
<evidence type="ECO:0000312" key="14">
    <source>
        <dbReference type="Araport" id="AT2G16070"/>
    </source>
</evidence>
<evidence type="ECO:0000312" key="15">
    <source>
        <dbReference type="EMBL" id="AAD26950.1"/>
    </source>
</evidence>
<evidence type="ECO:0007744" key="16">
    <source>
        <dbReference type="PDB" id="5GTB"/>
    </source>
</evidence>
<evidence type="ECO:0007744" key="17">
    <source>
    </source>
</evidence>
<evidence type="ECO:0007744" key="18">
    <source>
    </source>
</evidence>
<evidence type="ECO:0007829" key="19">
    <source>
        <dbReference type="PDB" id="5GTB"/>
    </source>
</evidence>
<dbReference type="EMBL" id="AB252217">
    <property type="protein sequence ID" value="BAF36495.1"/>
    <property type="molecule type" value="Genomic_DNA"/>
</dbReference>
<dbReference type="EMBL" id="AB252219">
    <property type="protein sequence ID" value="BAF36497.1"/>
    <property type="molecule type" value="mRNA"/>
</dbReference>
<dbReference type="EMBL" id="AC007134">
    <property type="protein sequence ID" value="AAD26950.1"/>
    <property type="molecule type" value="Genomic_DNA"/>
</dbReference>
<dbReference type="EMBL" id="CP002685">
    <property type="protein sequence ID" value="AEC06464.1"/>
    <property type="molecule type" value="Genomic_DNA"/>
</dbReference>
<dbReference type="EMBL" id="CP002685">
    <property type="protein sequence ID" value="AEC06465.1"/>
    <property type="molecule type" value="Genomic_DNA"/>
</dbReference>
<dbReference type="EMBL" id="CP002685">
    <property type="protein sequence ID" value="ANM62193.1"/>
    <property type="molecule type" value="Genomic_DNA"/>
</dbReference>
<dbReference type="EMBL" id="AY056812">
    <property type="protein sequence ID" value="AAL10503.1"/>
    <property type="molecule type" value="mRNA"/>
</dbReference>
<dbReference type="EMBL" id="AY080829">
    <property type="protein sequence ID" value="AAL87305.1"/>
    <property type="molecule type" value="mRNA"/>
</dbReference>
<dbReference type="EMBL" id="AY113976">
    <property type="protein sequence ID" value="AAM45024.1"/>
    <property type="molecule type" value="mRNA"/>
</dbReference>
<dbReference type="EMBL" id="AY088807">
    <property type="protein sequence ID" value="AAM67117.1"/>
    <property type="molecule type" value="mRNA"/>
</dbReference>
<dbReference type="PIR" id="D84536">
    <property type="entry name" value="D84536"/>
</dbReference>
<dbReference type="RefSeq" id="NP_001324370.1">
    <molecule id="Q9XII1-2"/>
    <property type="nucleotide sequence ID" value="NM_001335463.1"/>
</dbReference>
<dbReference type="RefSeq" id="NP_028242.1">
    <molecule id="Q9XII1-1"/>
    <property type="nucleotide sequence ID" value="NM_127166.4"/>
</dbReference>
<dbReference type="RefSeq" id="NP_849959.1">
    <molecule id="Q9XII1-2"/>
    <property type="nucleotide sequence ID" value="NM_179628.4"/>
</dbReference>
<dbReference type="PDB" id="5GTB">
    <property type="method" value="X-ray"/>
    <property type="resolution" value="2.87 A"/>
    <property type="chains" value="B=284-307"/>
</dbReference>
<dbReference type="PDBsum" id="5GTB"/>
<dbReference type="SMR" id="Q9XII1"/>
<dbReference type="BioGRID" id="1463">
    <property type="interactions" value="6"/>
</dbReference>
<dbReference type="FunCoup" id="Q9XII1">
    <property type="interactions" value="831"/>
</dbReference>
<dbReference type="IntAct" id="Q9XII1">
    <property type="interactions" value="3"/>
</dbReference>
<dbReference type="STRING" id="3702.Q9XII1"/>
<dbReference type="iPTMnet" id="Q9XII1"/>
<dbReference type="PaxDb" id="3702-AT2G16070.2"/>
<dbReference type="ProteomicsDB" id="251401">
    <molecule id="Q9XII1-1"/>
</dbReference>
<dbReference type="EnsemblPlants" id="AT2G16070.1">
    <molecule id="Q9XII1-2"/>
    <property type="protein sequence ID" value="AT2G16070.1"/>
    <property type="gene ID" value="AT2G16070"/>
</dbReference>
<dbReference type="EnsemblPlants" id="AT2G16070.2">
    <molecule id="Q9XII1-1"/>
    <property type="protein sequence ID" value="AT2G16070.2"/>
    <property type="gene ID" value="AT2G16070"/>
</dbReference>
<dbReference type="EnsemblPlants" id="AT2G16070.3">
    <molecule id="Q9XII1-2"/>
    <property type="protein sequence ID" value="AT2G16070.3"/>
    <property type="gene ID" value="AT2G16070"/>
</dbReference>
<dbReference type="GeneID" id="816104"/>
<dbReference type="Gramene" id="AT2G16070.1">
    <molecule id="Q9XII1-2"/>
    <property type="protein sequence ID" value="AT2G16070.1"/>
    <property type="gene ID" value="AT2G16070"/>
</dbReference>
<dbReference type="Gramene" id="AT2G16070.2">
    <molecule id="Q9XII1-1"/>
    <property type="protein sequence ID" value="AT2G16070.2"/>
    <property type="gene ID" value="AT2G16070"/>
</dbReference>
<dbReference type="Gramene" id="AT2G16070.3">
    <molecule id="Q9XII1-2"/>
    <property type="protein sequence ID" value="AT2G16070.3"/>
    <property type="gene ID" value="AT2G16070"/>
</dbReference>
<dbReference type="KEGG" id="ath:AT2G16070"/>
<dbReference type="Araport" id="AT2G16070"/>
<dbReference type="TAIR" id="AT2G16070">
    <property type="gene designation" value="PDV2"/>
</dbReference>
<dbReference type="eggNOG" id="ENOG502REYJ">
    <property type="taxonomic scope" value="Eukaryota"/>
</dbReference>
<dbReference type="HOGENOM" id="CLU_075429_0_0_1"/>
<dbReference type="InParanoid" id="Q9XII1"/>
<dbReference type="OMA" id="NCIHRAT"/>
<dbReference type="PhylomeDB" id="Q9XII1"/>
<dbReference type="PRO" id="PR:Q9XII1"/>
<dbReference type="Proteomes" id="UP000006548">
    <property type="component" value="Chromosome 2"/>
</dbReference>
<dbReference type="ExpressionAtlas" id="Q9XII1">
    <property type="expression patterns" value="baseline and differential"/>
</dbReference>
<dbReference type="GO" id="GO:0009707">
    <property type="term" value="C:chloroplast outer membrane"/>
    <property type="evidence" value="ECO:0000314"/>
    <property type="project" value="UniProtKB"/>
</dbReference>
<dbReference type="GO" id="GO:0005739">
    <property type="term" value="C:mitochondrion"/>
    <property type="evidence" value="ECO:0007005"/>
    <property type="project" value="TAIR"/>
</dbReference>
<dbReference type="GO" id="GO:0009536">
    <property type="term" value="C:plastid"/>
    <property type="evidence" value="ECO:0007005"/>
    <property type="project" value="TAIR"/>
</dbReference>
<dbReference type="GO" id="GO:0070273">
    <property type="term" value="F:phosphatidylinositol-4-phosphate binding"/>
    <property type="evidence" value="ECO:0000314"/>
    <property type="project" value="UniProtKB"/>
</dbReference>
<dbReference type="GO" id="GO:0010020">
    <property type="term" value="P:chloroplast fission"/>
    <property type="evidence" value="ECO:0000315"/>
    <property type="project" value="UniProtKB"/>
</dbReference>
<dbReference type="GO" id="GO:0009739">
    <property type="term" value="P:response to gibberellin"/>
    <property type="evidence" value="ECO:0000270"/>
    <property type="project" value="UniProtKB"/>
</dbReference>
<dbReference type="InterPro" id="IPR038939">
    <property type="entry name" value="PDV1/PDV2"/>
</dbReference>
<dbReference type="PANTHER" id="PTHR33600">
    <property type="entry name" value="PLASTID DIVISION PROTEIN PDV2"/>
    <property type="match status" value="1"/>
</dbReference>
<dbReference type="PANTHER" id="PTHR33600:SF3">
    <property type="entry name" value="PLASTID DIVISION PROTEIN PDV2"/>
    <property type="match status" value="1"/>
</dbReference>
<feature type="chain" id="PRO_0000406944" description="Plastid division protein PDV2">
    <location>
        <begin position="1"/>
        <end position="307"/>
    </location>
</feature>
<feature type="topological domain" description="Cytoplasmic" evidence="1">
    <location>
        <begin position="1"/>
        <end position="213"/>
    </location>
</feature>
<feature type="transmembrane region" description="Helical" evidence="1">
    <location>
        <begin position="214"/>
        <end position="234"/>
    </location>
</feature>
<feature type="topological domain" description="Chloroplast intermembrane" evidence="1">
    <location>
        <begin position="235"/>
        <end position="307"/>
    </location>
</feature>
<feature type="region of interest" description="Disordered" evidence="2">
    <location>
        <begin position="28"/>
        <end position="66"/>
    </location>
</feature>
<feature type="region of interest" description="Disordered" evidence="2">
    <location>
        <begin position="174"/>
        <end position="206"/>
    </location>
</feature>
<feature type="region of interest" description="ARC6 binding" evidence="4 9 16">
    <location>
        <begin position="235"/>
        <end position="307"/>
    </location>
</feature>
<feature type="coiled-coil region" evidence="1">
    <location>
        <begin position="76"/>
        <end position="103"/>
    </location>
</feature>
<feature type="compositionally biased region" description="Basic and acidic residues" evidence="2">
    <location>
        <begin position="46"/>
        <end position="61"/>
    </location>
</feature>
<feature type="modified residue" description="N-acetylmethionine" evidence="18">
    <location>
        <position position="1"/>
    </location>
</feature>
<feature type="modified residue" description="Phosphoserine" evidence="17">
    <location>
        <position position="50"/>
    </location>
</feature>
<feature type="splice variant" id="VSP_040897" description="In isoform 2." evidence="11">
    <original>MEDEEGIGLILARATELRLKISDCIDNSSTTVSDNGDGNEDLSPGEGRKSEIIGNQDKDFDSISSEDVDEAEAERLLRIRDALEALESQLASL</original>
    <variation>MWGWFLVCGE</variation>
    <location>
        <begin position="1"/>
        <end position="93"/>
    </location>
</feature>
<feature type="mutagenesis site" description="In pdv2-4; impaired interaction with PDV2 leading to altered chloroplast division and fewer but larger chloroplasts." evidence="9">
    <original>R</original>
    <variation>K</variation>
    <location>
        <position position="288"/>
    </location>
</feature>
<feature type="mutagenesis site" description="Impaired ARC6 interaction, and reduced number of constricted and large chloroplasts." evidence="4">
    <original>G</original>
    <variation>D</variation>
    <location>
        <position position="307"/>
    </location>
</feature>
<feature type="strand" evidence="19">
    <location>
        <begin position="289"/>
        <end position="291"/>
    </location>
</feature>
<reference key="1">
    <citation type="journal article" date="2006" name="Plant Cell">
        <title>PDV1 and PDV2 mediate recruitment of the dynamin-related protein ARC5 to the plastid division site.</title>
        <authorList>
            <person name="Miyagishima S.-Y."/>
            <person name="Froehlich J.E."/>
            <person name="Osteryoung K.W."/>
        </authorList>
    </citation>
    <scope>NUCLEOTIDE SEQUENCE [GENOMIC DNA / MRNA] (ISOFORM 1)</scope>
    <scope>FUNCTION</scope>
    <scope>DISRUPTION PHENOTYPE</scope>
    <source>
        <strain>cv. Columbia</strain>
    </source>
</reference>
<reference key="2">
    <citation type="journal article" date="1999" name="Nature">
        <title>Sequence and analysis of chromosome 2 of the plant Arabidopsis thaliana.</title>
        <authorList>
            <person name="Lin X."/>
            <person name="Kaul S."/>
            <person name="Rounsley S.D."/>
            <person name="Shea T.P."/>
            <person name="Benito M.-I."/>
            <person name="Town C.D."/>
            <person name="Fujii C.Y."/>
            <person name="Mason T.M."/>
            <person name="Bowman C.L."/>
            <person name="Barnstead M.E."/>
            <person name="Feldblyum T.V."/>
            <person name="Buell C.R."/>
            <person name="Ketchum K.A."/>
            <person name="Lee J.J."/>
            <person name="Ronning C.M."/>
            <person name="Koo H.L."/>
            <person name="Moffat K.S."/>
            <person name="Cronin L.A."/>
            <person name="Shen M."/>
            <person name="Pai G."/>
            <person name="Van Aken S."/>
            <person name="Umayam L."/>
            <person name="Tallon L.J."/>
            <person name="Gill J.E."/>
            <person name="Adams M.D."/>
            <person name="Carrera A.J."/>
            <person name="Creasy T.H."/>
            <person name="Goodman H.M."/>
            <person name="Somerville C.R."/>
            <person name="Copenhaver G.P."/>
            <person name="Preuss D."/>
            <person name="Nierman W.C."/>
            <person name="White O."/>
            <person name="Eisen J.A."/>
            <person name="Salzberg S.L."/>
            <person name="Fraser C.M."/>
            <person name="Venter J.C."/>
        </authorList>
    </citation>
    <scope>NUCLEOTIDE SEQUENCE [LARGE SCALE GENOMIC DNA]</scope>
    <source>
        <strain>cv. Columbia</strain>
    </source>
</reference>
<reference key="3">
    <citation type="journal article" date="2017" name="Plant J.">
        <title>Araport11: a complete reannotation of the Arabidopsis thaliana reference genome.</title>
        <authorList>
            <person name="Cheng C.Y."/>
            <person name="Krishnakumar V."/>
            <person name="Chan A.P."/>
            <person name="Thibaud-Nissen F."/>
            <person name="Schobel S."/>
            <person name="Town C.D."/>
        </authorList>
    </citation>
    <scope>GENOME REANNOTATION</scope>
    <source>
        <strain>cv. Columbia</strain>
    </source>
</reference>
<reference key="4">
    <citation type="journal article" date="2003" name="Science">
        <title>Empirical analysis of transcriptional activity in the Arabidopsis genome.</title>
        <authorList>
            <person name="Yamada K."/>
            <person name="Lim J."/>
            <person name="Dale J.M."/>
            <person name="Chen H."/>
            <person name="Shinn P."/>
            <person name="Palm C.J."/>
            <person name="Southwick A.M."/>
            <person name="Wu H.C."/>
            <person name="Kim C.J."/>
            <person name="Nguyen M."/>
            <person name="Pham P.K."/>
            <person name="Cheuk R.F."/>
            <person name="Karlin-Newmann G."/>
            <person name="Liu S.X."/>
            <person name="Lam B."/>
            <person name="Sakano H."/>
            <person name="Wu T."/>
            <person name="Yu G."/>
            <person name="Miranda M."/>
            <person name="Quach H.L."/>
            <person name="Tripp M."/>
            <person name="Chang C.H."/>
            <person name="Lee J.M."/>
            <person name="Toriumi M.J."/>
            <person name="Chan M.M."/>
            <person name="Tang C.C."/>
            <person name="Onodera C.S."/>
            <person name="Deng J.M."/>
            <person name="Akiyama K."/>
            <person name="Ansari Y."/>
            <person name="Arakawa T."/>
            <person name="Banh J."/>
            <person name="Banno F."/>
            <person name="Bowser L."/>
            <person name="Brooks S.Y."/>
            <person name="Carninci P."/>
            <person name="Chao Q."/>
            <person name="Choy N."/>
            <person name="Enju A."/>
            <person name="Goldsmith A.D."/>
            <person name="Gurjal M."/>
            <person name="Hansen N.F."/>
            <person name="Hayashizaki Y."/>
            <person name="Johnson-Hopson C."/>
            <person name="Hsuan V.W."/>
            <person name="Iida K."/>
            <person name="Karnes M."/>
            <person name="Khan S."/>
            <person name="Koesema E."/>
            <person name="Ishida J."/>
            <person name="Jiang P.X."/>
            <person name="Jones T."/>
            <person name="Kawai J."/>
            <person name="Kamiya A."/>
            <person name="Meyers C."/>
            <person name="Nakajima M."/>
            <person name="Narusaka M."/>
            <person name="Seki M."/>
            <person name="Sakurai T."/>
            <person name="Satou M."/>
            <person name="Tamse R."/>
            <person name="Vaysberg M."/>
            <person name="Wallender E.K."/>
            <person name="Wong C."/>
            <person name="Yamamura Y."/>
            <person name="Yuan S."/>
            <person name="Shinozaki K."/>
            <person name="Davis R.W."/>
            <person name="Theologis A."/>
            <person name="Ecker J.R."/>
        </authorList>
    </citation>
    <scope>NUCLEOTIDE SEQUENCE [LARGE SCALE MRNA] (ISOFORMS 1 AND 2)</scope>
    <source>
        <strain>cv. Columbia</strain>
    </source>
</reference>
<reference key="5">
    <citation type="submission" date="2002-03" db="EMBL/GenBank/DDBJ databases">
        <title>Full-length cDNA from Arabidopsis thaliana.</title>
        <authorList>
            <person name="Brover V.V."/>
            <person name="Troukhan M.E."/>
            <person name="Alexandrov N.A."/>
            <person name="Lu Y.-P."/>
            <person name="Flavell R.B."/>
            <person name="Feldmann K.A."/>
        </authorList>
    </citation>
    <scope>NUCLEOTIDE SEQUENCE [LARGE SCALE MRNA] (ISOFORM 1)</scope>
</reference>
<reference key="6">
    <citation type="journal article" date="2008" name="Plant Cell">
        <title>Arabidopsis ARC6 coordinates the division machineries of the inner and outer chloroplast membranes through interaction with PDV2 in the intermembrane space.</title>
        <authorList>
            <person name="Glynn J.M."/>
            <person name="Froehlich J.E."/>
            <person name="Osteryoung K.W."/>
        </authorList>
    </citation>
    <scope>FUNCTION</scope>
    <scope>INTERACTION WITH ARC6</scope>
    <scope>SUBCELLULAR LOCATION</scope>
    <scope>DISRUPTION PHENOTYPE</scope>
    <scope>MUTAGENESIS OF GLY-307</scope>
    <source>
        <strain>cv. Columbia</strain>
    </source>
</reference>
<reference key="7">
    <citation type="journal article" date="2009" name="J. Proteomics">
        <title>Phosphoproteomic analysis of nuclei-enriched fractions from Arabidopsis thaliana.</title>
        <authorList>
            <person name="Jones A.M.E."/>
            <person name="MacLean D."/>
            <person name="Studholme D.J."/>
            <person name="Serna-Sanz A."/>
            <person name="Andreasson E."/>
            <person name="Rathjen J.P."/>
            <person name="Peck S.C."/>
        </authorList>
    </citation>
    <scope>PHOSPHORYLATION [LARGE SCALE ANALYSIS] AT SER-50</scope>
    <scope>IDENTIFICATION BY MASS SPECTROMETRY [LARGE SCALE ANALYSIS]</scope>
    <source>
        <strain>cv. Columbia</strain>
    </source>
</reference>
<reference key="8">
    <citation type="journal article" date="2009" name="Plant J.">
        <title>PARC6, a novel chloroplast division factor, influences FtsZ assembly and is required for recruitment of PDV1 during chloroplast division in Arabidopsis.</title>
        <authorList>
            <person name="Glynn J.M."/>
            <person name="Yang Y."/>
            <person name="Vitha S."/>
            <person name="Schmitz A.J."/>
            <person name="Hemmes M."/>
            <person name="Miyagishima S.-Y."/>
            <person name="Osteryoung K.W."/>
        </authorList>
    </citation>
    <scope>SUBCELLULAR LOCATION</scope>
</reference>
<reference key="9">
    <citation type="journal article" date="2009" name="Plant Physiol.">
        <title>Large-scale Arabidopsis phosphoproteome profiling reveals novel chloroplast kinase substrates and phosphorylation networks.</title>
        <authorList>
            <person name="Reiland S."/>
            <person name="Messerli G."/>
            <person name="Baerenfaller K."/>
            <person name="Gerrits B."/>
            <person name="Endler A."/>
            <person name="Grossmann J."/>
            <person name="Gruissem W."/>
            <person name="Baginsky S."/>
        </authorList>
    </citation>
    <scope>IDENTIFICATION BY MASS SPECTROMETRY [LARGE SCALE ANALYSIS]</scope>
</reference>
<reference key="10">
    <citation type="journal article" date="2012" name="Mol. Cell. Proteomics">
        <title>Comparative large-scale characterisation of plant vs. mammal proteins reveals similar and idiosyncratic N-alpha acetylation features.</title>
        <authorList>
            <person name="Bienvenut W.V."/>
            <person name="Sumpton D."/>
            <person name="Martinez A."/>
            <person name="Lilla S."/>
            <person name="Espagne C."/>
            <person name="Meinnel T."/>
            <person name="Giglione C."/>
        </authorList>
    </citation>
    <scope>ACETYLATION [LARGE SCALE ANALYSIS] AT MET-1</scope>
    <scope>IDENTIFICATION BY MASS SPECTROMETRY [LARGE SCALE ANALYSIS]</scope>
</reference>
<reference key="11">
    <citation type="journal article" date="2012" name="Plant J.">
        <title>Gibberellin indirectly promotes chloroplast biogenesis as a means to maintain the chloroplast population of expanded cells.</title>
        <authorList>
            <person name="Jiang X."/>
            <person name="Li H."/>
            <person name="Wang T."/>
            <person name="Peng C."/>
            <person name="Wang H."/>
            <person name="Wu H."/>
            <person name="Wang X."/>
        </authorList>
    </citation>
    <scope>INDUCTION BY GIBBERELLIC ACID</scope>
</reference>
<reference key="12">
    <citation type="journal article" date="2015" name="Plant Cell">
        <title>Phosphatidylinositol 4-phosphate negatively regulates chloroplast division in Arabidopsis.</title>
        <authorList>
            <person name="Okazaki K."/>
            <person name="Miyagishima S.-Y."/>
            <person name="Wada H."/>
        </authorList>
    </citation>
    <scope>FUNCTION</scope>
    <source>
        <strain>cv. Columbia</strain>
    </source>
</reference>
<reference key="13">
    <citation type="journal article" date="2017" name="Plant Cell Rep.">
        <title>PDV2 has a dosage effect on chloroplast division in Arabidopsis.</title>
        <authorList>
            <person name="Chang N."/>
            <person name="Sun Q."/>
            <person name="Li Y."/>
            <person name="Mu Y."/>
            <person name="Hu J."/>
            <person name="Feng Y."/>
            <person name="Liu X."/>
            <person name="Gao H."/>
        </authorList>
    </citation>
    <scope>FUNCTION</scope>
    <scope>DISRUPTION PHENOTYPE</scope>
    <scope>TISSUE SPECIFICITY</scope>
    <scope>DEVELOPMENTAL STAGE</scope>
    <source>
        <strain>cv. Columbia</strain>
        <strain>cv. Landsberg erecta</strain>
    </source>
</reference>
<reference key="14">
    <citation type="journal article" date="2020" name="Plant Physiol.">
        <title>PDV1 and PDV2 differentially affect remodeling and assembly of the chloroplast DRP5B ring.</title>
        <authorList>
            <person name="Sun B."/>
            <person name="Zhang Q.-Y."/>
            <person name="Yuan H."/>
            <person name="Gao W."/>
            <person name="Han B."/>
            <person name="Zhang M."/>
        </authorList>
    </citation>
    <scope>FUNCTION</scope>
    <scope>DISRUPTION PHENOTYPE</scope>
    <scope>SUBCELLULAR LOCATION</scope>
    <scope>INTERACTION WITH ARC5/DRP5B</scope>
    <source>
        <strain>cv. Columbia</strain>
        <strain>cv. Landsberg erecta</strain>
    </source>
</reference>
<reference key="15">
    <citation type="journal article" date="2017" name="Nat. Plants">
        <title>Structural insights into the coordination of plastid division by the ARC6-PDV2 complex.</title>
        <authorList>
            <person name="Wang W."/>
            <person name="Li J."/>
            <person name="Sun Q."/>
            <person name="Yu X."/>
            <person name="Zhang W."/>
            <person name="Jia N."/>
            <person name="An C."/>
            <person name="Li Y."/>
            <person name="Dong Y."/>
            <person name="Han F."/>
            <person name="Chang N."/>
            <person name="Liu X."/>
            <person name="Zhu Z."/>
            <person name="Yu Y."/>
            <person name="Fan S."/>
            <person name="Yang M."/>
            <person name="Luo S.-Z."/>
            <person name="Gao H."/>
            <person name="Feng Y."/>
        </authorList>
    </citation>
    <scope>X-RAY CRYSTALLOGRAPHY (2.87 ANGSTROMS) OF 284-307 IN COMPLEX WITH ARC6</scope>
    <scope>FUNCTION</scope>
    <scope>MUTAGENESIS OF ARG-288</scope>
    <scope>DISRUPTION PHENOTYPE</scope>
    <scope>INTERACTION WITH ARC6</scope>
</reference>
<organism>
    <name type="scientific">Arabidopsis thaliana</name>
    <name type="common">Mouse-ear cress</name>
    <dbReference type="NCBI Taxonomy" id="3702"/>
    <lineage>
        <taxon>Eukaryota</taxon>
        <taxon>Viridiplantae</taxon>
        <taxon>Streptophyta</taxon>
        <taxon>Embryophyta</taxon>
        <taxon>Tracheophyta</taxon>
        <taxon>Spermatophyta</taxon>
        <taxon>Magnoliopsida</taxon>
        <taxon>eudicotyledons</taxon>
        <taxon>Gunneridae</taxon>
        <taxon>Pentapetalae</taxon>
        <taxon>rosids</taxon>
        <taxon>malvids</taxon>
        <taxon>Brassicales</taxon>
        <taxon>Brassicaceae</taxon>
        <taxon>Camelineae</taxon>
        <taxon>Arabidopsis</taxon>
    </lineage>
</organism>